<sequence>MIEADRLISAEPINEEEILDRAIRPKLLTEYVGQPHVREQMEIFIQAAKQRGDALDHLLIFGPPGLGKTTLANIVANEMGVNLRTTSGPVLEKAGDLAAMLTNLEPHDVLFIDEIHRLSPVVEEVLYPAMEDYQLDIMIGEGPAARSIKLDLPPFTLVGATTRAGSLTSPLRDRFGIVQRLEFYQVADLQHIVSRSANCLGLDLSEEGAHQVARRARGTPRIANRLLRRVRDFAEVRANGVINGEVAMQALDMLNVDAEGFDYMDRKLLLAIIDKFTGGPVGLDNLAAAIGEERETIEDVIEPFLIQQGFIQRTPRGRMATNHAYKHFGMVREE</sequence>
<comment type="function">
    <text evidence="1">The RuvA-RuvB-RuvC complex processes Holliday junction (HJ) DNA during genetic recombination and DNA repair, while the RuvA-RuvB complex plays an important role in the rescue of blocked DNA replication forks via replication fork reversal (RFR). RuvA specifically binds to HJ cruciform DNA, conferring on it an open structure. The RuvB hexamer acts as an ATP-dependent pump, pulling dsDNA into and through the RuvAB complex. RuvB forms 2 homohexamers on either side of HJ DNA bound by 1 or 2 RuvA tetramers; 4 subunits per hexamer contact DNA at a time. Coordinated motions by a converter formed by DNA-disengaged RuvB subunits stimulates ATP hydrolysis and nucleotide exchange. Immobilization of the converter enables RuvB to convert the ATP-contained energy into a lever motion, pulling 2 nucleotides of DNA out of the RuvA tetramer per ATP hydrolyzed, thus driving DNA branch migration. The RuvB motors rotate together with the DNA substrate, which together with the progressing nucleotide cycle form the mechanistic basis for DNA recombination by continuous HJ branch migration. Branch migration allows RuvC to scan DNA until it finds its consensus sequence, where it cleaves and resolves cruciform DNA.</text>
</comment>
<comment type="catalytic activity">
    <reaction evidence="1">
        <text>ATP + H2O = ADP + phosphate + H(+)</text>
        <dbReference type="Rhea" id="RHEA:13065"/>
        <dbReference type="ChEBI" id="CHEBI:15377"/>
        <dbReference type="ChEBI" id="CHEBI:15378"/>
        <dbReference type="ChEBI" id="CHEBI:30616"/>
        <dbReference type="ChEBI" id="CHEBI:43474"/>
        <dbReference type="ChEBI" id="CHEBI:456216"/>
    </reaction>
</comment>
<comment type="subunit">
    <text evidence="1">Homohexamer. Forms an RuvA(8)-RuvB(12)-Holliday junction (HJ) complex. HJ DNA is sandwiched between 2 RuvA tetramers; dsDNA enters through RuvA and exits via RuvB. An RuvB hexamer assembles on each DNA strand where it exits the tetramer. Each RuvB hexamer is contacted by two RuvA subunits (via domain III) on 2 adjacent RuvB subunits; this complex drives branch migration. In the full resolvosome a probable DNA-RuvA(4)-RuvB(12)-RuvC(2) complex forms which resolves the HJ.</text>
</comment>
<comment type="subcellular location">
    <subcellularLocation>
        <location evidence="1">Cytoplasm</location>
    </subcellularLocation>
</comment>
<comment type="domain">
    <text evidence="1">Has 3 domains, the large (RuvB-L) and small ATPase (RuvB-S) domains and the C-terminal head (RuvB-H) domain. The head domain binds DNA, while the ATPase domains jointly bind ATP, ADP or are empty depending on the state of the subunit in the translocation cycle. During a single DNA translocation step the structure of each domain remains the same, but their relative positions change.</text>
</comment>
<comment type="similarity">
    <text evidence="1">Belongs to the RuvB family.</text>
</comment>
<evidence type="ECO:0000255" key="1">
    <source>
        <dbReference type="HAMAP-Rule" id="MF_00016"/>
    </source>
</evidence>
<keyword id="KW-0067">ATP-binding</keyword>
<keyword id="KW-0963">Cytoplasm</keyword>
<keyword id="KW-0227">DNA damage</keyword>
<keyword id="KW-0233">DNA recombination</keyword>
<keyword id="KW-0234">DNA repair</keyword>
<keyword id="KW-0238">DNA-binding</keyword>
<keyword id="KW-0378">Hydrolase</keyword>
<keyword id="KW-0547">Nucleotide-binding</keyword>
<gene>
    <name evidence="1" type="primary">ruvB</name>
    <name type="ordered locus">Spro_2776</name>
</gene>
<reference key="1">
    <citation type="submission" date="2007-09" db="EMBL/GenBank/DDBJ databases">
        <title>Complete sequence of chromosome of Serratia proteamaculans 568.</title>
        <authorList>
            <consortium name="US DOE Joint Genome Institute"/>
            <person name="Copeland A."/>
            <person name="Lucas S."/>
            <person name="Lapidus A."/>
            <person name="Barry K."/>
            <person name="Glavina del Rio T."/>
            <person name="Dalin E."/>
            <person name="Tice H."/>
            <person name="Pitluck S."/>
            <person name="Chain P."/>
            <person name="Malfatti S."/>
            <person name="Shin M."/>
            <person name="Vergez L."/>
            <person name="Schmutz J."/>
            <person name="Larimer F."/>
            <person name="Land M."/>
            <person name="Hauser L."/>
            <person name="Kyrpides N."/>
            <person name="Kim E."/>
            <person name="Taghavi S."/>
            <person name="Newman L."/>
            <person name="Vangronsveld J."/>
            <person name="van der Lelie D."/>
            <person name="Richardson P."/>
        </authorList>
    </citation>
    <scope>NUCLEOTIDE SEQUENCE [LARGE SCALE GENOMIC DNA]</scope>
    <source>
        <strain>568</strain>
    </source>
</reference>
<feature type="chain" id="PRO_1000057144" description="Holliday junction branch migration complex subunit RuvB">
    <location>
        <begin position="1"/>
        <end position="334"/>
    </location>
</feature>
<feature type="region of interest" description="Large ATPase domain (RuvB-L)" evidence="1">
    <location>
        <begin position="4"/>
        <end position="184"/>
    </location>
</feature>
<feature type="region of interest" description="Small ATPAse domain (RuvB-S)" evidence="1">
    <location>
        <begin position="185"/>
        <end position="255"/>
    </location>
</feature>
<feature type="region of interest" description="Head domain (RuvB-H)" evidence="1">
    <location>
        <begin position="258"/>
        <end position="334"/>
    </location>
</feature>
<feature type="binding site" evidence="1">
    <location>
        <position position="23"/>
    </location>
    <ligand>
        <name>ATP</name>
        <dbReference type="ChEBI" id="CHEBI:30616"/>
    </ligand>
</feature>
<feature type="binding site" evidence="1">
    <location>
        <position position="24"/>
    </location>
    <ligand>
        <name>ATP</name>
        <dbReference type="ChEBI" id="CHEBI:30616"/>
    </ligand>
</feature>
<feature type="binding site" evidence="1">
    <location>
        <position position="65"/>
    </location>
    <ligand>
        <name>ATP</name>
        <dbReference type="ChEBI" id="CHEBI:30616"/>
    </ligand>
</feature>
<feature type="binding site" evidence="1">
    <location>
        <position position="68"/>
    </location>
    <ligand>
        <name>ATP</name>
        <dbReference type="ChEBI" id="CHEBI:30616"/>
    </ligand>
</feature>
<feature type="binding site" evidence="1">
    <location>
        <position position="69"/>
    </location>
    <ligand>
        <name>ATP</name>
        <dbReference type="ChEBI" id="CHEBI:30616"/>
    </ligand>
</feature>
<feature type="binding site" evidence="1">
    <location>
        <position position="69"/>
    </location>
    <ligand>
        <name>Mg(2+)</name>
        <dbReference type="ChEBI" id="CHEBI:18420"/>
    </ligand>
</feature>
<feature type="binding site" evidence="1">
    <location>
        <position position="70"/>
    </location>
    <ligand>
        <name>ATP</name>
        <dbReference type="ChEBI" id="CHEBI:30616"/>
    </ligand>
</feature>
<feature type="binding site" evidence="1">
    <location>
        <begin position="131"/>
        <end position="133"/>
    </location>
    <ligand>
        <name>ATP</name>
        <dbReference type="ChEBI" id="CHEBI:30616"/>
    </ligand>
</feature>
<feature type="binding site" evidence="1">
    <location>
        <position position="174"/>
    </location>
    <ligand>
        <name>ATP</name>
        <dbReference type="ChEBI" id="CHEBI:30616"/>
    </ligand>
</feature>
<feature type="binding site" evidence="1">
    <location>
        <position position="184"/>
    </location>
    <ligand>
        <name>ATP</name>
        <dbReference type="ChEBI" id="CHEBI:30616"/>
    </ligand>
</feature>
<feature type="binding site" evidence="1">
    <location>
        <position position="221"/>
    </location>
    <ligand>
        <name>ATP</name>
        <dbReference type="ChEBI" id="CHEBI:30616"/>
    </ligand>
</feature>
<feature type="binding site" evidence="1">
    <location>
        <position position="294"/>
    </location>
    <ligand>
        <name>DNA</name>
        <dbReference type="ChEBI" id="CHEBI:16991"/>
    </ligand>
</feature>
<feature type="binding site" evidence="1">
    <location>
        <position position="313"/>
    </location>
    <ligand>
        <name>DNA</name>
        <dbReference type="ChEBI" id="CHEBI:16991"/>
    </ligand>
</feature>
<feature type="binding site" evidence="1">
    <location>
        <position position="318"/>
    </location>
    <ligand>
        <name>DNA</name>
        <dbReference type="ChEBI" id="CHEBI:16991"/>
    </ligand>
</feature>
<proteinExistence type="inferred from homology"/>
<organism>
    <name type="scientific">Serratia proteamaculans (strain 568)</name>
    <dbReference type="NCBI Taxonomy" id="399741"/>
    <lineage>
        <taxon>Bacteria</taxon>
        <taxon>Pseudomonadati</taxon>
        <taxon>Pseudomonadota</taxon>
        <taxon>Gammaproteobacteria</taxon>
        <taxon>Enterobacterales</taxon>
        <taxon>Yersiniaceae</taxon>
        <taxon>Serratia</taxon>
    </lineage>
</organism>
<name>RUVB_SERP5</name>
<accession>A8GFI7</accession>
<protein>
    <recommendedName>
        <fullName evidence="1">Holliday junction branch migration complex subunit RuvB</fullName>
        <ecNumber evidence="1">3.6.4.-</ecNumber>
    </recommendedName>
</protein>
<dbReference type="EC" id="3.6.4.-" evidence="1"/>
<dbReference type="EMBL" id="CP000826">
    <property type="protein sequence ID" value="ABV41877.1"/>
    <property type="molecule type" value="Genomic_DNA"/>
</dbReference>
<dbReference type="SMR" id="A8GFI7"/>
<dbReference type="STRING" id="399741.Spro_2776"/>
<dbReference type="KEGG" id="spe:Spro_2776"/>
<dbReference type="eggNOG" id="COG2255">
    <property type="taxonomic scope" value="Bacteria"/>
</dbReference>
<dbReference type="HOGENOM" id="CLU_055599_1_0_6"/>
<dbReference type="OrthoDB" id="9804478at2"/>
<dbReference type="GO" id="GO:0005737">
    <property type="term" value="C:cytoplasm"/>
    <property type="evidence" value="ECO:0007669"/>
    <property type="project" value="UniProtKB-SubCell"/>
</dbReference>
<dbReference type="GO" id="GO:0048476">
    <property type="term" value="C:Holliday junction resolvase complex"/>
    <property type="evidence" value="ECO:0007669"/>
    <property type="project" value="UniProtKB-UniRule"/>
</dbReference>
<dbReference type="GO" id="GO:0005524">
    <property type="term" value="F:ATP binding"/>
    <property type="evidence" value="ECO:0007669"/>
    <property type="project" value="UniProtKB-UniRule"/>
</dbReference>
<dbReference type="GO" id="GO:0016887">
    <property type="term" value="F:ATP hydrolysis activity"/>
    <property type="evidence" value="ECO:0007669"/>
    <property type="project" value="InterPro"/>
</dbReference>
<dbReference type="GO" id="GO:0000400">
    <property type="term" value="F:four-way junction DNA binding"/>
    <property type="evidence" value="ECO:0007669"/>
    <property type="project" value="UniProtKB-UniRule"/>
</dbReference>
<dbReference type="GO" id="GO:0009378">
    <property type="term" value="F:four-way junction helicase activity"/>
    <property type="evidence" value="ECO:0007669"/>
    <property type="project" value="InterPro"/>
</dbReference>
<dbReference type="GO" id="GO:0006310">
    <property type="term" value="P:DNA recombination"/>
    <property type="evidence" value="ECO:0007669"/>
    <property type="project" value="UniProtKB-UniRule"/>
</dbReference>
<dbReference type="GO" id="GO:0006281">
    <property type="term" value="P:DNA repair"/>
    <property type="evidence" value="ECO:0007669"/>
    <property type="project" value="UniProtKB-UniRule"/>
</dbReference>
<dbReference type="CDD" id="cd00009">
    <property type="entry name" value="AAA"/>
    <property type="match status" value="1"/>
</dbReference>
<dbReference type="FunFam" id="1.10.10.10:FF:000086">
    <property type="entry name" value="Holliday junction ATP-dependent DNA helicase RuvB"/>
    <property type="match status" value="1"/>
</dbReference>
<dbReference type="FunFam" id="1.10.8.60:FF:000023">
    <property type="entry name" value="Holliday junction ATP-dependent DNA helicase RuvB"/>
    <property type="match status" value="1"/>
</dbReference>
<dbReference type="FunFam" id="3.40.50.300:FF:000073">
    <property type="entry name" value="Holliday junction ATP-dependent DNA helicase RuvB"/>
    <property type="match status" value="1"/>
</dbReference>
<dbReference type="Gene3D" id="1.10.8.60">
    <property type="match status" value="1"/>
</dbReference>
<dbReference type="Gene3D" id="3.40.50.300">
    <property type="entry name" value="P-loop containing nucleotide triphosphate hydrolases"/>
    <property type="match status" value="1"/>
</dbReference>
<dbReference type="Gene3D" id="1.10.10.10">
    <property type="entry name" value="Winged helix-like DNA-binding domain superfamily/Winged helix DNA-binding domain"/>
    <property type="match status" value="1"/>
</dbReference>
<dbReference type="HAMAP" id="MF_00016">
    <property type="entry name" value="DNA_HJ_migration_RuvB"/>
    <property type="match status" value="1"/>
</dbReference>
<dbReference type="InterPro" id="IPR003593">
    <property type="entry name" value="AAA+_ATPase"/>
</dbReference>
<dbReference type="InterPro" id="IPR041445">
    <property type="entry name" value="AAA_lid_4"/>
</dbReference>
<dbReference type="InterPro" id="IPR004605">
    <property type="entry name" value="DNA_helicase_Holl-junc_RuvB"/>
</dbReference>
<dbReference type="InterPro" id="IPR027417">
    <property type="entry name" value="P-loop_NTPase"/>
</dbReference>
<dbReference type="InterPro" id="IPR008824">
    <property type="entry name" value="RuvB-like_N"/>
</dbReference>
<dbReference type="InterPro" id="IPR008823">
    <property type="entry name" value="RuvB_C"/>
</dbReference>
<dbReference type="InterPro" id="IPR036388">
    <property type="entry name" value="WH-like_DNA-bd_sf"/>
</dbReference>
<dbReference type="InterPro" id="IPR036390">
    <property type="entry name" value="WH_DNA-bd_sf"/>
</dbReference>
<dbReference type="NCBIfam" id="NF000868">
    <property type="entry name" value="PRK00080.1"/>
    <property type="match status" value="1"/>
</dbReference>
<dbReference type="NCBIfam" id="TIGR00635">
    <property type="entry name" value="ruvB"/>
    <property type="match status" value="1"/>
</dbReference>
<dbReference type="PANTHER" id="PTHR42848">
    <property type="match status" value="1"/>
</dbReference>
<dbReference type="PANTHER" id="PTHR42848:SF1">
    <property type="entry name" value="HOLLIDAY JUNCTION BRANCH MIGRATION COMPLEX SUBUNIT RUVB"/>
    <property type="match status" value="1"/>
</dbReference>
<dbReference type="Pfam" id="PF17864">
    <property type="entry name" value="AAA_lid_4"/>
    <property type="match status" value="1"/>
</dbReference>
<dbReference type="Pfam" id="PF05491">
    <property type="entry name" value="RuvB_C"/>
    <property type="match status" value="1"/>
</dbReference>
<dbReference type="Pfam" id="PF05496">
    <property type="entry name" value="RuvB_N"/>
    <property type="match status" value="1"/>
</dbReference>
<dbReference type="SMART" id="SM00382">
    <property type="entry name" value="AAA"/>
    <property type="match status" value="1"/>
</dbReference>
<dbReference type="SUPFAM" id="SSF52540">
    <property type="entry name" value="P-loop containing nucleoside triphosphate hydrolases"/>
    <property type="match status" value="1"/>
</dbReference>
<dbReference type="SUPFAM" id="SSF46785">
    <property type="entry name" value="Winged helix' DNA-binding domain"/>
    <property type="match status" value="1"/>
</dbReference>